<protein>
    <recommendedName>
        <fullName evidence="1">tRNA modification GTPase MnmE</fullName>
        <ecNumber evidence="1">3.6.-.-</ecNumber>
    </recommendedName>
</protein>
<evidence type="ECO:0000255" key="1">
    <source>
        <dbReference type="HAMAP-Rule" id="MF_00379"/>
    </source>
</evidence>
<reference key="1">
    <citation type="journal article" date="2004" name="Proc. Natl. Acad. Sci. U.S.A.">
        <title>Comparison of the genome of the oral pathogen Treponema denticola with other spirochete genomes.</title>
        <authorList>
            <person name="Seshadri R."/>
            <person name="Myers G.S.A."/>
            <person name="Tettelin H."/>
            <person name="Eisen J.A."/>
            <person name="Heidelberg J.F."/>
            <person name="Dodson R.J."/>
            <person name="Davidsen T.M."/>
            <person name="DeBoy R.T."/>
            <person name="Fouts D.E."/>
            <person name="Haft D.H."/>
            <person name="Selengut J."/>
            <person name="Ren Q."/>
            <person name="Brinkac L.M."/>
            <person name="Madupu R."/>
            <person name="Kolonay J.F."/>
            <person name="Durkin S.A."/>
            <person name="Daugherty S.C."/>
            <person name="Shetty J."/>
            <person name="Shvartsbeyn A."/>
            <person name="Gebregeorgis E."/>
            <person name="Geer K."/>
            <person name="Tsegaye G."/>
            <person name="Malek J.A."/>
            <person name="Ayodeji B."/>
            <person name="Shatsman S."/>
            <person name="McLeod M.P."/>
            <person name="Smajs D."/>
            <person name="Howell J.K."/>
            <person name="Pal S."/>
            <person name="Amin A."/>
            <person name="Vashisth P."/>
            <person name="McNeill T.Z."/>
            <person name="Xiang Q."/>
            <person name="Sodergren E."/>
            <person name="Baca E."/>
            <person name="Weinstock G.M."/>
            <person name="Norris S.J."/>
            <person name="Fraser C.M."/>
            <person name="Paulsen I.T."/>
        </authorList>
    </citation>
    <scope>NUCLEOTIDE SEQUENCE [LARGE SCALE GENOMIC DNA]</scope>
    <source>
        <strain>ATCC 35405 / DSM 14222 / CIP 103919 / JCM 8153 / KCTC 15104</strain>
    </source>
</reference>
<organism>
    <name type="scientific">Treponema denticola (strain ATCC 35405 / DSM 14222 / CIP 103919 / JCM 8153 / KCTC 15104)</name>
    <dbReference type="NCBI Taxonomy" id="243275"/>
    <lineage>
        <taxon>Bacteria</taxon>
        <taxon>Pseudomonadati</taxon>
        <taxon>Spirochaetota</taxon>
        <taxon>Spirochaetia</taxon>
        <taxon>Spirochaetales</taxon>
        <taxon>Treponemataceae</taxon>
        <taxon>Treponema</taxon>
    </lineage>
</organism>
<feature type="chain" id="PRO_0000345933" description="tRNA modification GTPase MnmE">
    <location>
        <begin position="1"/>
        <end position="472"/>
    </location>
</feature>
<feature type="domain" description="TrmE-type G">
    <location>
        <begin position="225"/>
        <end position="391"/>
    </location>
</feature>
<feature type="binding site" evidence="1">
    <location>
        <position position="28"/>
    </location>
    <ligand>
        <name>(6S)-5-formyl-5,6,7,8-tetrahydrofolate</name>
        <dbReference type="ChEBI" id="CHEBI:57457"/>
    </ligand>
</feature>
<feature type="binding site" evidence="1">
    <location>
        <position position="91"/>
    </location>
    <ligand>
        <name>(6S)-5-formyl-5,6,7,8-tetrahydrofolate</name>
        <dbReference type="ChEBI" id="CHEBI:57457"/>
    </ligand>
</feature>
<feature type="binding site" evidence="1">
    <location>
        <position position="130"/>
    </location>
    <ligand>
        <name>(6S)-5-formyl-5,6,7,8-tetrahydrofolate</name>
        <dbReference type="ChEBI" id="CHEBI:57457"/>
    </ligand>
</feature>
<feature type="binding site" evidence="1">
    <location>
        <begin position="235"/>
        <end position="240"/>
    </location>
    <ligand>
        <name>GTP</name>
        <dbReference type="ChEBI" id="CHEBI:37565"/>
    </ligand>
</feature>
<feature type="binding site" evidence="1">
    <location>
        <position position="235"/>
    </location>
    <ligand>
        <name>K(+)</name>
        <dbReference type="ChEBI" id="CHEBI:29103"/>
    </ligand>
</feature>
<feature type="binding site" evidence="1">
    <location>
        <position position="239"/>
    </location>
    <ligand>
        <name>Mg(2+)</name>
        <dbReference type="ChEBI" id="CHEBI:18420"/>
    </ligand>
</feature>
<feature type="binding site" evidence="1">
    <location>
        <begin position="254"/>
        <end position="260"/>
    </location>
    <ligand>
        <name>GTP</name>
        <dbReference type="ChEBI" id="CHEBI:37565"/>
    </ligand>
</feature>
<feature type="binding site" evidence="1">
    <location>
        <position position="254"/>
    </location>
    <ligand>
        <name>K(+)</name>
        <dbReference type="ChEBI" id="CHEBI:29103"/>
    </ligand>
</feature>
<feature type="binding site" evidence="1">
    <location>
        <position position="256"/>
    </location>
    <ligand>
        <name>K(+)</name>
        <dbReference type="ChEBI" id="CHEBI:29103"/>
    </ligand>
</feature>
<feature type="binding site" evidence="1">
    <location>
        <position position="259"/>
    </location>
    <ligand>
        <name>K(+)</name>
        <dbReference type="ChEBI" id="CHEBI:29103"/>
    </ligand>
</feature>
<feature type="binding site" evidence="1">
    <location>
        <position position="260"/>
    </location>
    <ligand>
        <name>Mg(2+)</name>
        <dbReference type="ChEBI" id="CHEBI:18420"/>
    </ligand>
</feature>
<feature type="binding site" evidence="1">
    <location>
        <begin position="279"/>
        <end position="282"/>
    </location>
    <ligand>
        <name>GTP</name>
        <dbReference type="ChEBI" id="CHEBI:37565"/>
    </ligand>
</feature>
<feature type="binding site" evidence="1">
    <location>
        <position position="472"/>
    </location>
    <ligand>
        <name>(6S)-5-formyl-5,6,7,8-tetrahydrofolate</name>
        <dbReference type="ChEBI" id="CHEBI:57457"/>
    </ligand>
</feature>
<comment type="function">
    <text evidence="1">Exhibits a very high intrinsic GTPase hydrolysis rate. Involved in the addition of a carboxymethylaminomethyl (cmnm) group at the wobble position (U34) of certain tRNAs, forming tRNA-cmnm(5)s(2)U34.</text>
</comment>
<comment type="cofactor">
    <cofactor evidence="1">
        <name>K(+)</name>
        <dbReference type="ChEBI" id="CHEBI:29103"/>
    </cofactor>
    <text evidence="1">Binds 1 potassium ion per subunit.</text>
</comment>
<comment type="subunit">
    <text evidence="1">Homodimer. Heterotetramer of two MnmE and two MnmG subunits.</text>
</comment>
<comment type="subcellular location">
    <subcellularLocation>
        <location evidence="1">Cytoplasm</location>
    </subcellularLocation>
</comment>
<comment type="similarity">
    <text evidence="1">Belongs to the TRAFAC class TrmE-Era-EngA-EngB-Septin-like GTPase superfamily. TrmE GTPase family.</text>
</comment>
<proteinExistence type="inferred from homology"/>
<accession>Q73KN7</accession>
<keyword id="KW-0963">Cytoplasm</keyword>
<keyword id="KW-0342">GTP-binding</keyword>
<keyword id="KW-0378">Hydrolase</keyword>
<keyword id="KW-0460">Magnesium</keyword>
<keyword id="KW-0479">Metal-binding</keyword>
<keyword id="KW-0547">Nucleotide-binding</keyword>
<keyword id="KW-0630">Potassium</keyword>
<keyword id="KW-1185">Reference proteome</keyword>
<keyword id="KW-0819">tRNA processing</keyword>
<name>MNME_TREDE</name>
<sequence length="472" mass="50927">MQIGKYSLGDPIAAIATALSPAALGIVRTSGEGAIDLASAIFSKPKKLKEAQGNSILHGWVLDPESKKEVDEVTVCVYREPKSFTGEDSVEFICHGGTAVVLKIYRLLIENGFRAAEGGEFTFRAFANGKADLTRAEAVNEIINSKTDINIELAAGRLSGNLFSGIEEIKHELTAVIAAADVEIEYPEDEETSQGAFSPDLILRIIEPLKDLADSWAAEKIFIQGAKVVLAGKTNAGKSSLFNALLKEDRAIVSDIHGTTRDWLEASLNFNGIPVSLYDTAGIRYTQDSIEAIGVERSLEMSRNADLILYLCDPKDILSAGSLNKDDSEFIKNAKAPVITVITKEDLLDTESKEKIKEILKAEKIAEPIIISSKASNGIKALSEKAYSVLAKNTGSSGFSKTASLGSERQRDAVQKALDVLQTAYQNSLEGFPLDLIVEDLEEALSFLGEITGEVRSDDILDKVFSGFCVGK</sequence>
<gene>
    <name evidence="1" type="primary">mnmE</name>
    <name evidence="1" type="synonym">trmE</name>
    <name type="ordered locus">TDE_2180</name>
</gene>
<dbReference type="EC" id="3.6.-.-" evidence="1"/>
<dbReference type="EMBL" id="AE017226">
    <property type="protein sequence ID" value="AAS12700.1"/>
    <property type="molecule type" value="Genomic_DNA"/>
</dbReference>
<dbReference type="RefSeq" id="NP_972781.1">
    <property type="nucleotide sequence ID" value="NC_002967.9"/>
</dbReference>
<dbReference type="RefSeq" id="WP_002680027.1">
    <property type="nucleotide sequence ID" value="NC_002967.9"/>
</dbReference>
<dbReference type="SMR" id="Q73KN7"/>
<dbReference type="STRING" id="243275.TDE_2180"/>
<dbReference type="PaxDb" id="243275-TDE_2180"/>
<dbReference type="GeneID" id="2740202"/>
<dbReference type="KEGG" id="tde:TDE_2180"/>
<dbReference type="PATRIC" id="fig|243275.7.peg.2057"/>
<dbReference type="eggNOG" id="COG0486">
    <property type="taxonomic scope" value="Bacteria"/>
</dbReference>
<dbReference type="HOGENOM" id="CLU_019624_4_1_12"/>
<dbReference type="OrthoDB" id="9805918at2"/>
<dbReference type="Proteomes" id="UP000008212">
    <property type="component" value="Chromosome"/>
</dbReference>
<dbReference type="GO" id="GO:0005829">
    <property type="term" value="C:cytosol"/>
    <property type="evidence" value="ECO:0007669"/>
    <property type="project" value="TreeGrafter"/>
</dbReference>
<dbReference type="GO" id="GO:0005525">
    <property type="term" value="F:GTP binding"/>
    <property type="evidence" value="ECO:0007669"/>
    <property type="project" value="UniProtKB-UniRule"/>
</dbReference>
<dbReference type="GO" id="GO:0003924">
    <property type="term" value="F:GTPase activity"/>
    <property type="evidence" value="ECO:0007669"/>
    <property type="project" value="UniProtKB-UniRule"/>
</dbReference>
<dbReference type="GO" id="GO:0046872">
    <property type="term" value="F:metal ion binding"/>
    <property type="evidence" value="ECO:0007669"/>
    <property type="project" value="UniProtKB-KW"/>
</dbReference>
<dbReference type="GO" id="GO:0030488">
    <property type="term" value="P:tRNA methylation"/>
    <property type="evidence" value="ECO:0007669"/>
    <property type="project" value="TreeGrafter"/>
</dbReference>
<dbReference type="GO" id="GO:0002098">
    <property type="term" value="P:tRNA wobble uridine modification"/>
    <property type="evidence" value="ECO:0007669"/>
    <property type="project" value="TreeGrafter"/>
</dbReference>
<dbReference type="CDD" id="cd04164">
    <property type="entry name" value="trmE"/>
    <property type="match status" value="1"/>
</dbReference>
<dbReference type="CDD" id="cd14858">
    <property type="entry name" value="TrmE_N"/>
    <property type="match status" value="1"/>
</dbReference>
<dbReference type="FunFam" id="3.40.50.300:FF:001376">
    <property type="entry name" value="tRNA modification GTPase MnmE"/>
    <property type="match status" value="1"/>
</dbReference>
<dbReference type="Gene3D" id="3.40.50.300">
    <property type="entry name" value="P-loop containing nucleotide triphosphate hydrolases"/>
    <property type="match status" value="1"/>
</dbReference>
<dbReference type="Gene3D" id="3.30.1360.120">
    <property type="entry name" value="Probable tRNA modification gtpase trme, domain 1"/>
    <property type="match status" value="1"/>
</dbReference>
<dbReference type="Gene3D" id="1.20.120.430">
    <property type="entry name" value="tRNA modification GTPase MnmE domain 2"/>
    <property type="match status" value="1"/>
</dbReference>
<dbReference type="HAMAP" id="MF_00379">
    <property type="entry name" value="GTPase_MnmE"/>
    <property type="match status" value="1"/>
</dbReference>
<dbReference type="InterPro" id="IPR031168">
    <property type="entry name" value="G_TrmE"/>
</dbReference>
<dbReference type="InterPro" id="IPR006073">
    <property type="entry name" value="GTP-bd"/>
</dbReference>
<dbReference type="InterPro" id="IPR018948">
    <property type="entry name" value="GTP-bd_TrmE_N"/>
</dbReference>
<dbReference type="InterPro" id="IPR004520">
    <property type="entry name" value="GTPase_MnmE"/>
</dbReference>
<dbReference type="InterPro" id="IPR027368">
    <property type="entry name" value="MnmE_dom2"/>
</dbReference>
<dbReference type="InterPro" id="IPR025867">
    <property type="entry name" value="MnmE_helical"/>
</dbReference>
<dbReference type="InterPro" id="IPR027417">
    <property type="entry name" value="P-loop_NTPase"/>
</dbReference>
<dbReference type="InterPro" id="IPR005225">
    <property type="entry name" value="Small_GTP-bd"/>
</dbReference>
<dbReference type="InterPro" id="IPR027266">
    <property type="entry name" value="TrmE/GcvT_dom1"/>
</dbReference>
<dbReference type="NCBIfam" id="TIGR00450">
    <property type="entry name" value="mnmE_trmE_thdF"/>
    <property type="match status" value="1"/>
</dbReference>
<dbReference type="NCBIfam" id="TIGR00231">
    <property type="entry name" value="small_GTP"/>
    <property type="match status" value="1"/>
</dbReference>
<dbReference type="PANTHER" id="PTHR42714">
    <property type="entry name" value="TRNA MODIFICATION GTPASE GTPBP3"/>
    <property type="match status" value="1"/>
</dbReference>
<dbReference type="PANTHER" id="PTHR42714:SF2">
    <property type="entry name" value="TRNA MODIFICATION GTPASE GTPBP3, MITOCHONDRIAL"/>
    <property type="match status" value="1"/>
</dbReference>
<dbReference type="Pfam" id="PF01926">
    <property type="entry name" value="MMR_HSR1"/>
    <property type="match status" value="1"/>
</dbReference>
<dbReference type="Pfam" id="PF12631">
    <property type="entry name" value="MnmE_helical"/>
    <property type="match status" value="1"/>
</dbReference>
<dbReference type="Pfam" id="PF10396">
    <property type="entry name" value="TrmE_N"/>
    <property type="match status" value="1"/>
</dbReference>
<dbReference type="SUPFAM" id="SSF52540">
    <property type="entry name" value="P-loop containing nucleoside triphosphate hydrolases"/>
    <property type="match status" value="1"/>
</dbReference>
<dbReference type="PROSITE" id="PS51709">
    <property type="entry name" value="G_TRME"/>
    <property type="match status" value="1"/>
</dbReference>